<gene>
    <name type="primary">CYP6K1</name>
</gene>
<accession>Q964R0</accession>
<organism>
    <name type="scientific">Blattella germanica</name>
    <name type="common">German cockroach</name>
    <name type="synonym">Blatta germanica</name>
    <dbReference type="NCBI Taxonomy" id="6973"/>
    <lineage>
        <taxon>Eukaryota</taxon>
        <taxon>Metazoa</taxon>
        <taxon>Ecdysozoa</taxon>
        <taxon>Arthropoda</taxon>
        <taxon>Hexapoda</taxon>
        <taxon>Insecta</taxon>
        <taxon>Pterygota</taxon>
        <taxon>Neoptera</taxon>
        <taxon>Polyneoptera</taxon>
        <taxon>Dictyoptera</taxon>
        <taxon>Blattodea</taxon>
        <taxon>Blaberoidea</taxon>
        <taxon>Blattellidae</taxon>
        <taxon>Blattella</taxon>
    </lineage>
</organism>
<reference key="1">
    <citation type="journal article" date="2001" name="Insect Mol. Biol.">
        <title>Cloning of two novel P450 cDNAs from German cockroaches, Blattella germanica (L.): CYP6K1 and CYP6J1.</title>
        <authorList>
            <person name="Wen Z."/>
            <person name="Scott J.G."/>
        </authorList>
    </citation>
    <scope>NUCLEOTIDE SEQUENCE [MRNA]</scope>
    <scope>DEVELOPMENTAL STAGE</scope>
</reference>
<comment type="cofactor">
    <cofactor evidence="1">
        <name>heme</name>
        <dbReference type="ChEBI" id="CHEBI:30413"/>
    </cofactor>
</comment>
<comment type="subcellular location">
    <subcellularLocation>
        <location evidence="3">Endoplasmic reticulum membrane</location>
        <topology evidence="3">Peripheral membrane protein</topology>
    </subcellularLocation>
    <subcellularLocation>
        <location evidence="3">Microsome membrane</location>
        <topology evidence="3">Peripheral membrane protein</topology>
    </subcellularLocation>
</comment>
<comment type="developmental stage">
    <text evidence="2">Detected in the eggs and stronger expression in later instars. The strongest signals were detected in the fifth and sixth instars as well as in adults.</text>
</comment>
<comment type="similarity">
    <text evidence="3">Belongs to the cytochrome P450 family.</text>
</comment>
<keyword id="KW-0256">Endoplasmic reticulum</keyword>
<keyword id="KW-0349">Heme</keyword>
<keyword id="KW-0408">Iron</keyword>
<keyword id="KW-0472">Membrane</keyword>
<keyword id="KW-0479">Metal-binding</keyword>
<keyword id="KW-0492">Microsome</keyword>
<keyword id="KW-0503">Monooxygenase</keyword>
<keyword id="KW-0560">Oxidoreductase</keyword>
<name>CP6K1_BLAGE</name>
<evidence type="ECO:0000250" key="1"/>
<evidence type="ECO:0000269" key="2">
    <source>
    </source>
</evidence>
<evidence type="ECO:0000305" key="3"/>
<protein>
    <recommendedName>
        <fullName>Cytochrome P450 6k1</fullName>
        <ecNumber>1.14.-.-</ecNumber>
    </recommendedName>
    <alternativeName>
        <fullName>CYPVIK1</fullName>
    </alternativeName>
</protein>
<sequence length="524" mass="59619">MVTITGCALCDALVILATLIVAAYLYYAVRFTYWKRKGVVNPKPLPVFGNFLPSVLQKRSPGQILWDIYKAAEAPFVGFYIFARPAILIKDPNIIKHVLVKDFNAFSDRHASAAESDTLGSQNLFTLNGAPWKYLRVKLSPTFTSGRMKKMYPLVESCAKQLQDYLKENCNTKAIEVKETTAKYATDVISTCAFGIESNSLKDPNAEFREFGRKIFEFTRYRTFEVMALFFSPGLVKFLNGNFFTKETTEFLRKVFWDTINFRESNKISRDDFMDLLIQLKNKGTIDNEDGEVTEKVDKIDKDSHLFEFTGDNLVSQPALFFTAGFETNATTLSFTLYELSLQPDLQNRLRSEIAGVMKTSNGKPTYEDVFGMPYLHMVVSETLRKYPPLPLLDRVCLQDYKVPGTDLIIERDTPVFIALLGLHRDPQYYPNPERYDPERFSEENKRQRKAYTYLPFGEGPHNCIGLRFGYMAVKTALVHMLAEFEVKPCKDTPIPLELSTRSSVLATTSGIPLTFVKSTAQVS</sequence>
<proteinExistence type="evidence at transcript level"/>
<feature type="chain" id="PRO_0000051886" description="Cytochrome P450 6k1">
    <location>
        <begin position="1"/>
        <end position="524"/>
    </location>
</feature>
<feature type="binding site" description="axial binding residue" evidence="1">
    <location>
        <position position="464"/>
    </location>
    <ligand>
        <name>heme</name>
        <dbReference type="ChEBI" id="CHEBI:30413"/>
    </ligand>
    <ligandPart>
        <name>Fe</name>
        <dbReference type="ChEBI" id="CHEBI:18248"/>
    </ligandPart>
</feature>
<dbReference type="EC" id="1.14.-.-"/>
<dbReference type="EMBL" id="AF281328">
    <property type="protein sequence ID" value="AAK57914.1"/>
    <property type="molecule type" value="mRNA"/>
</dbReference>
<dbReference type="SMR" id="Q964R0"/>
<dbReference type="GO" id="GO:0005789">
    <property type="term" value="C:endoplasmic reticulum membrane"/>
    <property type="evidence" value="ECO:0007669"/>
    <property type="project" value="UniProtKB-SubCell"/>
</dbReference>
<dbReference type="GO" id="GO:0020037">
    <property type="term" value="F:heme binding"/>
    <property type="evidence" value="ECO:0007669"/>
    <property type="project" value="InterPro"/>
</dbReference>
<dbReference type="GO" id="GO:0005506">
    <property type="term" value="F:iron ion binding"/>
    <property type="evidence" value="ECO:0007669"/>
    <property type="project" value="InterPro"/>
</dbReference>
<dbReference type="GO" id="GO:0004497">
    <property type="term" value="F:monooxygenase activity"/>
    <property type="evidence" value="ECO:0007669"/>
    <property type="project" value="UniProtKB-KW"/>
</dbReference>
<dbReference type="GO" id="GO:0016705">
    <property type="term" value="F:oxidoreductase activity, acting on paired donors, with incorporation or reduction of molecular oxygen"/>
    <property type="evidence" value="ECO:0007669"/>
    <property type="project" value="InterPro"/>
</dbReference>
<dbReference type="CDD" id="cd11056">
    <property type="entry name" value="CYP6-like"/>
    <property type="match status" value="1"/>
</dbReference>
<dbReference type="FunFam" id="1.10.630.10:FF:000042">
    <property type="entry name" value="Cytochrome P450"/>
    <property type="match status" value="1"/>
</dbReference>
<dbReference type="Gene3D" id="1.10.630.10">
    <property type="entry name" value="Cytochrome P450"/>
    <property type="match status" value="1"/>
</dbReference>
<dbReference type="InterPro" id="IPR001128">
    <property type="entry name" value="Cyt_P450"/>
</dbReference>
<dbReference type="InterPro" id="IPR017972">
    <property type="entry name" value="Cyt_P450_CS"/>
</dbReference>
<dbReference type="InterPro" id="IPR002401">
    <property type="entry name" value="Cyt_P450_E_grp-I"/>
</dbReference>
<dbReference type="InterPro" id="IPR036396">
    <property type="entry name" value="Cyt_P450_sf"/>
</dbReference>
<dbReference type="InterPro" id="IPR050476">
    <property type="entry name" value="Insect_CytP450_Detox"/>
</dbReference>
<dbReference type="PANTHER" id="PTHR24292">
    <property type="entry name" value="CYTOCHROME P450"/>
    <property type="match status" value="1"/>
</dbReference>
<dbReference type="PANTHER" id="PTHR24292:SF45">
    <property type="entry name" value="CYTOCHROME P450 6G1-RELATED"/>
    <property type="match status" value="1"/>
</dbReference>
<dbReference type="Pfam" id="PF00067">
    <property type="entry name" value="p450"/>
    <property type="match status" value="1"/>
</dbReference>
<dbReference type="PRINTS" id="PR00463">
    <property type="entry name" value="EP450I"/>
</dbReference>
<dbReference type="PRINTS" id="PR00385">
    <property type="entry name" value="P450"/>
</dbReference>
<dbReference type="SUPFAM" id="SSF48264">
    <property type="entry name" value="Cytochrome P450"/>
    <property type="match status" value="1"/>
</dbReference>
<dbReference type="PROSITE" id="PS00086">
    <property type="entry name" value="CYTOCHROME_P450"/>
    <property type="match status" value="1"/>
</dbReference>